<gene>
    <name evidence="1" type="primary">rpmE</name>
    <name type="ordered locus">CKR_3277</name>
</gene>
<reference key="1">
    <citation type="submission" date="2005-09" db="EMBL/GenBank/DDBJ databases">
        <title>Complete genome sequence of Clostridium kluyveri and comparative genomics of Clostridia species.</title>
        <authorList>
            <person name="Inui M."/>
            <person name="Nonaka H."/>
            <person name="Shinoda Y."/>
            <person name="Ikenaga Y."/>
            <person name="Abe M."/>
            <person name="Naito K."/>
            <person name="Vertes A.A."/>
            <person name="Yukawa H."/>
        </authorList>
    </citation>
    <scope>NUCLEOTIDE SEQUENCE [LARGE SCALE GENOMIC DNA]</scope>
    <source>
        <strain>NBRC 12016</strain>
    </source>
</reference>
<organism>
    <name type="scientific">Clostridium kluyveri (strain NBRC 12016)</name>
    <dbReference type="NCBI Taxonomy" id="583346"/>
    <lineage>
        <taxon>Bacteria</taxon>
        <taxon>Bacillati</taxon>
        <taxon>Bacillota</taxon>
        <taxon>Clostridia</taxon>
        <taxon>Eubacteriales</taxon>
        <taxon>Clostridiaceae</taxon>
        <taxon>Clostridium</taxon>
    </lineage>
</organism>
<dbReference type="EMBL" id="AP009049">
    <property type="protein sequence ID" value="BAH08328.1"/>
    <property type="molecule type" value="Genomic_DNA"/>
</dbReference>
<dbReference type="RefSeq" id="WP_012104031.1">
    <property type="nucleotide sequence ID" value="NC_011837.1"/>
</dbReference>
<dbReference type="SMR" id="B9DX85"/>
<dbReference type="KEGG" id="ckr:CKR_3277"/>
<dbReference type="HOGENOM" id="CLU_114306_4_3_9"/>
<dbReference type="Proteomes" id="UP000007969">
    <property type="component" value="Chromosome"/>
</dbReference>
<dbReference type="GO" id="GO:1990904">
    <property type="term" value="C:ribonucleoprotein complex"/>
    <property type="evidence" value="ECO:0007669"/>
    <property type="project" value="UniProtKB-KW"/>
</dbReference>
<dbReference type="GO" id="GO:0005840">
    <property type="term" value="C:ribosome"/>
    <property type="evidence" value="ECO:0007669"/>
    <property type="project" value="UniProtKB-KW"/>
</dbReference>
<dbReference type="GO" id="GO:0046872">
    <property type="term" value="F:metal ion binding"/>
    <property type="evidence" value="ECO:0007669"/>
    <property type="project" value="UniProtKB-KW"/>
</dbReference>
<dbReference type="GO" id="GO:0019843">
    <property type="term" value="F:rRNA binding"/>
    <property type="evidence" value="ECO:0007669"/>
    <property type="project" value="UniProtKB-KW"/>
</dbReference>
<dbReference type="GO" id="GO:0003735">
    <property type="term" value="F:structural constituent of ribosome"/>
    <property type="evidence" value="ECO:0007669"/>
    <property type="project" value="InterPro"/>
</dbReference>
<dbReference type="GO" id="GO:0006412">
    <property type="term" value="P:translation"/>
    <property type="evidence" value="ECO:0007669"/>
    <property type="project" value="UniProtKB-UniRule"/>
</dbReference>
<dbReference type="Gene3D" id="4.10.830.30">
    <property type="entry name" value="Ribosomal protein L31"/>
    <property type="match status" value="1"/>
</dbReference>
<dbReference type="HAMAP" id="MF_00501">
    <property type="entry name" value="Ribosomal_bL31_1"/>
    <property type="match status" value="1"/>
</dbReference>
<dbReference type="InterPro" id="IPR034704">
    <property type="entry name" value="Ribosomal_bL28/bL31-like_sf"/>
</dbReference>
<dbReference type="InterPro" id="IPR002150">
    <property type="entry name" value="Ribosomal_bL31"/>
</dbReference>
<dbReference type="InterPro" id="IPR027491">
    <property type="entry name" value="Ribosomal_bL31_A"/>
</dbReference>
<dbReference type="InterPro" id="IPR042105">
    <property type="entry name" value="Ribosomal_bL31_sf"/>
</dbReference>
<dbReference type="NCBIfam" id="TIGR00105">
    <property type="entry name" value="L31"/>
    <property type="match status" value="1"/>
</dbReference>
<dbReference type="NCBIfam" id="NF000612">
    <property type="entry name" value="PRK00019.1"/>
    <property type="match status" value="1"/>
</dbReference>
<dbReference type="NCBIfam" id="NF001809">
    <property type="entry name" value="PRK00528.1"/>
    <property type="match status" value="1"/>
</dbReference>
<dbReference type="PANTHER" id="PTHR33280">
    <property type="entry name" value="50S RIBOSOMAL PROTEIN L31, CHLOROPLASTIC"/>
    <property type="match status" value="1"/>
</dbReference>
<dbReference type="PANTHER" id="PTHR33280:SF1">
    <property type="entry name" value="LARGE RIBOSOMAL SUBUNIT PROTEIN BL31C"/>
    <property type="match status" value="1"/>
</dbReference>
<dbReference type="Pfam" id="PF01197">
    <property type="entry name" value="Ribosomal_L31"/>
    <property type="match status" value="1"/>
</dbReference>
<dbReference type="PRINTS" id="PR01249">
    <property type="entry name" value="RIBOSOMALL31"/>
</dbReference>
<dbReference type="SUPFAM" id="SSF143800">
    <property type="entry name" value="L28p-like"/>
    <property type="match status" value="1"/>
</dbReference>
<dbReference type="PROSITE" id="PS01143">
    <property type="entry name" value="RIBOSOMAL_L31"/>
    <property type="match status" value="1"/>
</dbReference>
<protein>
    <recommendedName>
        <fullName evidence="1">Large ribosomal subunit protein bL31</fullName>
    </recommendedName>
    <alternativeName>
        <fullName evidence="2">50S ribosomal protein L31</fullName>
    </alternativeName>
</protein>
<proteinExistence type="inferred from homology"/>
<keyword id="KW-0479">Metal-binding</keyword>
<keyword id="KW-0687">Ribonucleoprotein</keyword>
<keyword id="KW-0689">Ribosomal protein</keyword>
<keyword id="KW-0694">RNA-binding</keyword>
<keyword id="KW-0699">rRNA-binding</keyword>
<keyword id="KW-0862">Zinc</keyword>
<feature type="chain" id="PRO_1000176957" description="Large ribosomal subunit protein bL31">
    <location>
        <begin position="1"/>
        <end position="70"/>
    </location>
</feature>
<feature type="binding site" evidence="1">
    <location>
        <position position="17"/>
    </location>
    <ligand>
        <name>Zn(2+)</name>
        <dbReference type="ChEBI" id="CHEBI:29105"/>
    </ligand>
</feature>
<feature type="binding site" evidence="1">
    <location>
        <position position="19"/>
    </location>
    <ligand>
        <name>Zn(2+)</name>
        <dbReference type="ChEBI" id="CHEBI:29105"/>
    </ligand>
</feature>
<feature type="binding site" evidence="1">
    <location>
        <position position="37"/>
    </location>
    <ligand>
        <name>Zn(2+)</name>
        <dbReference type="ChEBI" id="CHEBI:29105"/>
    </ligand>
</feature>
<feature type="binding site" evidence="1">
    <location>
        <position position="40"/>
    </location>
    <ligand>
        <name>Zn(2+)</name>
        <dbReference type="ChEBI" id="CHEBI:29105"/>
    </ligand>
</feature>
<name>RL31_CLOK1</name>
<evidence type="ECO:0000255" key="1">
    <source>
        <dbReference type="HAMAP-Rule" id="MF_00501"/>
    </source>
</evidence>
<evidence type="ECO:0000305" key="2"/>
<sequence length="70" mass="7967">MKKGIHPEYYHDSVVKCACGNTFTTGSTQKELKVEICSKCHPFFTGKQKLVDAGGRVDRFLKKFNLKNEE</sequence>
<comment type="function">
    <text evidence="1">Binds the 23S rRNA.</text>
</comment>
<comment type="cofactor">
    <cofactor evidence="1">
        <name>Zn(2+)</name>
        <dbReference type="ChEBI" id="CHEBI:29105"/>
    </cofactor>
    <text evidence="1">Binds 1 zinc ion per subunit.</text>
</comment>
<comment type="subunit">
    <text evidence="1">Part of the 50S ribosomal subunit.</text>
</comment>
<comment type="similarity">
    <text evidence="1">Belongs to the bacterial ribosomal protein bL31 family. Type A subfamily.</text>
</comment>
<accession>B9DX85</accession>